<sequence length="335" mass="37457">MTWFTPDVIDAIIAVVKAIVVLLAVVVCGALLSFIERRLLGWWQDRYGPNRVGPFGMFQIAADMLKMFFKEDWTPPFADKVIFTLAPVVAMSALLIAFAVIPITPTWGVADLNIGLLFFFAMAGLSVYAVLFAGWSSNNKFALLGSLRASAQTVSYEVFMGLALMGIVVQVGSFNMRDIVEYQAQNLWFIIPQFFGFCTFFIAGVAVTHRHPFDQPEAEQELADGYHIEYAGMKWGMFFVGEYIGIILISALLVTLFFGGWHGPFDILPSLAFFWFALKTAFFIMLFILLRASIPRPRYDQVMDFSWKFCLPLTLINLLVTAAIVLLNTPAGSVQ</sequence>
<comment type="function">
    <text evidence="1">NDH-1 shuttles electrons from NADH, via FMN and iron-sulfur (Fe-S) centers, to quinones in the respiratory chain. The immediate electron acceptor for the enzyme in this species is believed to be ubiquinone. Couples the redox reaction to proton translocation (for every two electrons transferred, four hydrogen ions are translocated across the cytoplasmic membrane), and thus conserves the redox energy in a proton gradient. This subunit may bind ubiquinone.</text>
</comment>
<comment type="catalytic activity">
    <reaction evidence="1">
        <text>a quinone + NADH + 5 H(+)(in) = a quinol + NAD(+) + 4 H(+)(out)</text>
        <dbReference type="Rhea" id="RHEA:57888"/>
        <dbReference type="ChEBI" id="CHEBI:15378"/>
        <dbReference type="ChEBI" id="CHEBI:24646"/>
        <dbReference type="ChEBI" id="CHEBI:57540"/>
        <dbReference type="ChEBI" id="CHEBI:57945"/>
        <dbReference type="ChEBI" id="CHEBI:132124"/>
    </reaction>
</comment>
<comment type="subunit">
    <text evidence="1">NDH-1 is composed of 13 different subunits. Subunits NuoA, H, J, K, L, M, N constitute the membrane sector of the complex.</text>
</comment>
<comment type="subcellular location">
    <subcellularLocation>
        <location evidence="1">Cell inner membrane</location>
        <topology evidence="1">Multi-pass membrane protein</topology>
    </subcellularLocation>
</comment>
<comment type="similarity">
    <text evidence="1">Belongs to the complex I subunit 1 family.</text>
</comment>
<name>NUOH_PSE14</name>
<feature type="chain" id="PRO_0000240101" description="NADH-quinone oxidoreductase subunit H">
    <location>
        <begin position="1"/>
        <end position="335"/>
    </location>
</feature>
<feature type="transmembrane region" description="Helical" evidence="1">
    <location>
        <begin position="12"/>
        <end position="32"/>
    </location>
</feature>
<feature type="transmembrane region" description="Helical" evidence="1">
    <location>
        <begin position="81"/>
        <end position="101"/>
    </location>
</feature>
<feature type="transmembrane region" description="Helical" evidence="1">
    <location>
        <begin position="114"/>
        <end position="134"/>
    </location>
</feature>
<feature type="transmembrane region" description="Helical" evidence="1">
    <location>
        <begin position="154"/>
        <end position="174"/>
    </location>
</feature>
<feature type="transmembrane region" description="Helical" evidence="1">
    <location>
        <begin position="187"/>
        <end position="207"/>
    </location>
</feature>
<feature type="transmembrane region" description="Helical" evidence="1">
    <location>
        <begin position="238"/>
        <end position="258"/>
    </location>
</feature>
<feature type="transmembrane region" description="Helical" evidence="1">
    <location>
        <begin position="270"/>
        <end position="290"/>
    </location>
</feature>
<feature type="transmembrane region" description="Helical" evidence="1">
    <location>
        <begin position="307"/>
        <end position="327"/>
    </location>
</feature>
<protein>
    <recommendedName>
        <fullName evidence="1">NADH-quinone oxidoreductase subunit H</fullName>
        <ecNumber evidence="1">7.1.1.-</ecNumber>
    </recommendedName>
    <alternativeName>
        <fullName evidence="1">NADH dehydrogenase I subunit H</fullName>
    </alternativeName>
    <alternativeName>
        <fullName evidence="1">NDH-1 subunit H</fullName>
    </alternativeName>
</protein>
<gene>
    <name evidence="1" type="primary">nuoH</name>
    <name type="ordered locus">PSPPH_3115</name>
</gene>
<organism>
    <name type="scientific">Pseudomonas savastanoi pv. phaseolicola (strain 1448A / Race 6)</name>
    <name type="common">Pseudomonas syringae pv. phaseolicola (strain 1448A / Race 6)</name>
    <dbReference type="NCBI Taxonomy" id="264730"/>
    <lineage>
        <taxon>Bacteria</taxon>
        <taxon>Pseudomonadati</taxon>
        <taxon>Pseudomonadota</taxon>
        <taxon>Gammaproteobacteria</taxon>
        <taxon>Pseudomonadales</taxon>
        <taxon>Pseudomonadaceae</taxon>
        <taxon>Pseudomonas</taxon>
    </lineage>
</organism>
<keyword id="KW-0997">Cell inner membrane</keyword>
<keyword id="KW-1003">Cell membrane</keyword>
<keyword id="KW-0472">Membrane</keyword>
<keyword id="KW-0520">NAD</keyword>
<keyword id="KW-0874">Quinone</keyword>
<keyword id="KW-1278">Translocase</keyword>
<keyword id="KW-0812">Transmembrane</keyword>
<keyword id="KW-1133">Transmembrane helix</keyword>
<keyword id="KW-0830">Ubiquinone</keyword>
<proteinExistence type="inferred from homology"/>
<accession>Q48H48</accession>
<reference key="1">
    <citation type="journal article" date="2005" name="J. Bacteriol.">
        <title>Whole-genome sequence analysis of Pseudomonas syringae pv. phaseolicola 1448A reveals divergence among pathovars in genes involved in virulence and transposition.</title>
        <authorList>
            <person name="Joardar V."/>
            <person name="Lindeberg M."/>
            <person name="Jackson R.W."/>
            <person name="Selengut J."/>
            <person name="Dodson R."/>
            <person name="Brinkac L.M."/>
            <person name="Daugherty S.C."/>
            <person name="DeBoy R.T."/>
            <person name="Durkin A.S."/>
            <person name="Gwinn Giglio M."/>
            <person name="Madupu R."/>
            <person name="Nelson W.C."/>
            <person name="Rosovitz M.J."/>
            <person name="Sullivan S.A."/>
            <person name="Crabtree J."/>
            <person name="Creasy T."/>
            <person name="Davidsen T.M."/>
            <person name="Haft D.H."/>
            <person name="Zafar N."/>
            <person name="Zhou L."/>
            <person name="Halpin R."/>
            <person name="Holley T."/>
            <person name="Khouri H.M."/>
            <person name="Feldblyum T.V."/>
            <person name="White O."/>
            <person name="Fraser C.M."/>
            <person name="Chatterjee A.K."/>
            <person name="Cartinhour S."/>
            <person name="Schneider D."/>
            <person name="Mansfield J.W."/>
            <person name="Collmer A."/>
            <person name="Buell R."/>
        </authorList>
    </citation>
    <scope>NUCLEOTIDE SEQUENCE [LARGE SCALE GENOMIC DNA]</scope>
    <source>
        <strain>1448A / Race 6</strain>
    </source>
</reference>
<dbReference type="EC" id="7.1.1.-" evidence="1"/>
<dbReference type="EMBL" id="CP000058">
    <property type="protein sequence ID" value="AAZ35320.1"/>
    <property type="molecule type" value="Genomic_DNA"/>
</dbReference>
<dbReference type="RefSeq" id="WP_003371726.1">
    <property type="nucleotide sequence ID" value="NC_005773.3"/>
</dbReference>
<dbReference type="SMR" id="Q48H48"/>
<dbReference type="GeneID" id="96219670"/>
<dbReference type="KEGG" id="psp:PSPPH_3115"/>
<dbReference type="eggNOG" id="COG1005">
    <property type="taxonomic scope" value="Bacteria"/>
</dbReference>
<dbReference type="HOGENOM" id="CLU_015134_0_1_6"/>
<dbReference type="Proteomes" id="UP000000551">
    <property type="component" value="Chromosome"/>
</dbReference>
<dbReference type="GO" id="GO:0005886">
    <property type="term" value="C:plasma membrane"/>
    <property type="evidence" value="ECO:0007669"/>
    <property type="project" value="UniProtKB-SubCell"/>
</dbReference>
<dbReference type="GO" id="GO:0003954">
    <property type="term" value="F:NADH dehydrogenase activity"/>
    <property type="evidence" value="ECO:0007669"/>
    <property type="project" value="TreeGrafter"/>
</dbReference>
<dbReference type="GO" id="GO:0016655">
    <property type="term" value="F:oxidoreductase activity, acting on NAD(P)H, quinone or similar compound as acceptor"/>
    <property type="evidence" value="ECO:0007669"/>
    <property type="project" value="UniProtKB-UniRule"/>
</dbReference>
<dbReference type="GO" id="GO:0048038">
    <property type="term" value="F:quinone binding"/>
    <property type="evidence" value="ECO:0007669"/>
    <property type="project" value="UniProtKB-KW"/>
</dbReference>
<dbReference type="GO" id="GO:0009060">
    <property type="term" value="P:aerobic respiration"/>
    <property type="evidence" value="ECO:0007669"/>
    <property type="project" value="TreeGrafter"/>
</dbReference>
<dbReference type="HAMAP" id="MF_01350">
    <property type="entry name" value="NDH1_NuoH"/>
    <property type="match status" value="1"/>
</dbReference>
<dbReference type="InterPro" id="IPR001694">
    <property type="entry name" value="NADH_UbQ_OxRdtase_su1/FPO"/>
</dbReference>
<dbReference type="InterPro" id="IPR018086">
    <property type="entry name" value="NADH_UbQ_OxRdtase_su1_CS"/>
</dbReference>
<dbReference type="NCBIfam" id="NF004740">
    <property type="entry name" value="PRK06076.1-1"/>
    <property type="match status" value="1"/>
</dbReference>
<dbReference type="NCBIfam" id="NF004741">
    <property type="entry name" value="PRK06076.1-2"/>
    <property type="match status" value="1"/>
</dbReference>
<dbReference type="PANTHER" id="PTHR11432">
    <property type="entry name" value="NADH DEHYDROGENASE SUBUNIT 1"/>
    <property type="match status" value="1"/>
</dbReference>
<dbReference type="PANTHER" id="PTHR11432:SF3">
    <property type="entry name" value="NADH-UBIQUINONE OXIDOREDUCTASE CHAIN 1"/>
    <property type="match status" value="1"/>
</dbReference>
<dbReference type="Pfam" id="PF00146">
    <property type="entry name" value="NADHdh"/>
    <property type="match status" value="1"/>
</dbReference>
<dbReference type="PROSITE" id="PS00667">
    <property type="entry name" value="COMPLEX1_ND1_1"/>
    <property type="match status" value="1"/>
</dbReference>
<dbReference type="PROSITE" id="PS00668">
    <property type="entry name" value="COMPLEX1_ND1_2"/>
    <property type="match status" value="1"/>
</dbReference>
<evidence type="ECO:0000255" key="1">
    <source>
        <dbReference type="HAMAP-Rule" id="MF_01350"/>
    </source>
</evidence>